<proteinExistence type="inferred from homology"/>
<name>NADK_BDEBA</name>
<gene>
    <name evidence="1" type="primary">nadK</name>
    <name type="ordered locus">Bd3172</name>
</gene>
<accession>Q6MII5</accession>
<evidence type="ECO:0000255" key="1">
    <source>
        <dbReference type="HAMAP-Rule" id="MF_00361"/>
    </source>
</evidence>
<organism>
    <name type="scientific">Bdellovibrio bacteriovorus (strain ATCC 15356 / DSM 50701 / NCIMB 9529 / HD100)</name>
    <dbReference type="NCBI Taxonomy" id="264462"/>
    <lineage>
        <taxon>Bacteria</taxon>
        <taxon>Pseudomonadati</taxon>
        <taxon>Bdellovibrionota</taxon>
        <taxon>Bdellovibrionia</taxon>
        <taxon>Bdellovibrionales</taxon>
        <taxon>Pseudobdellovibrionaceae</taxon>
        <taxon>Bdellovibrio</taxon>
    </lineage>
</organism>
<reference key="1">
    <citation type="journal article" date="2004" name="Science">
        <title>A predator unmasked: life cycle of Bdellovibrio bacteriovorus from a genomic perspective.</title>
        <authorList>
            <person name="Rendulic S."/>
            <person name="Jagtap P."/>
            <person name="Rosinus A."/>
            <person name="Eppinger M."/>
            <person name="Baar C."/>
            <person name="Lanz C."/>
            <person name="Keller H."/>
            <person name="Lambert C."/>
            <person name="Evans K.J."/>
            <person name="Goesmann A."/>
            <person name="Meyer F."/>
            <person name="Sockett R.E."/>
            <person name="Schuster S.C."/>
        </authorList>
    </citation>
    <scope>NUCLEOTIDE SEQUENCE [LARGE SCALE GENOMIC DNA]</scope>
    <source>
        <strain>ATCC 15356 / DSM 50701 / NCIMB 9529 / HD100</strain>
    </source>
</reference>
<dbReference type="EC" id="2.7.1.23" evidence="1"/>
<dbReference type="EMBL" id="BX842654">
    <property type="protein sequence ID" value="CAE80928.1"/>
    <property type="molecule type" value="Genomic_DNA"/>
</dbReference>
<dbReference type="RefSeq" id="WP_011165532.1">
    <property type="nucleotide sequence ID" value="NC_005363.1"/>
</dbReference>
<dbReference type="SMR" id="Q6MII5"/>
<dbReference type="STRING" id="264462.Bd3172"/>
<dbReference type="GeneID" id="93014015"/>
<dbReference type="KEGG" id="bba:Bd3172"/>
<dbReference type="eggNOG" id="COG0061">
    <property type="taxonomic scope" value="Bacteria"/>
</dbReference>
<dbReference type="HOGENOM" id="CLU_008831_0_1_7"/>
<dbReference type="Proteomes" id="UP000008080">
    <property type="component" value="Chromosome"/>
</dbReference>
<dbReference type="GO" id="GO:0005737">
    <property type="term" value="C:cytoplasm"/>
    <property type="evidence" value="ECO:0007669"/>
    <property type="project" value="UniProtKB-SubCell"/>
</dbReference>
<dbReference type="GO" id="GO:0005524">
    <property type="term" value="F:ATP binding"/>
    <property type="evidence" value="ECO:0007669"/>
    <property type="project" value="UniProtKB-KW"/>
</dbReference>
<dbReference type="GO" id="GO:0046872">
    <property type="term" value="F:metal ion binding"/>
    <property type="evidence" value="ECO:0007669"/>
    <property type="project" value="UniProtKB-UniRule"/>
</dbReference>
<dbReference type="GO" id="GO:0051287">
    <property type="term" value="F:NAD binding"/>
    <property type="evidence" value="ECO:0007669"/>
    <property type="project" value="UniProtKB-ARBA"/>
</dbReference>
<dbReference type="GO" id="GO:0003951">
    <property type="term" value="F:NAD+ kinase activity"/>
    <property type="evidence" value="ECO:0007669"/>
    <property type="project" value="UniProtKB-UniRule"/>
</dbReference>
<dbReference type="GO" id="GO:0019674">
    <property type="term" value="P:NAD metabolic process"/>
    <property type="evidence" value="ECO:0007669"/>
    <property type="project" value="InterPro"/>
</dbReference>
<dbReference type="GO" id="GO:0006741">
    <property type="term" value="P:NADP biosynthetic process"/>
    <property type="evidence" value="ECO:0007669"/>
    <property type="project" value="UniProtKB-UniRule"/>
</dbReference>
<dbReference type="Gene3D" id="3.40.50.10330">
    <property type="entry name" value="Probable inorganic polyphosphate/atp-NAD kinase, domain 1"/>
    <property type="match status" value="1"/>
</dbReference>
<dbReference type="Gene3D" id="2.60.200.30">
    <property type="entry name" value="Probable inorganic polyphosphate/atp-NAD kinase, domain 2"/>
    <property type="match status" value="1"/>
</dbReference>
<dbReference type="HAMAP" id="MF_00361">
    <property type="entry name" value="NAD_kinase"/>
    <property type="match status" value="1"/>
</dbReference>
<dbReference type="InterPro" id="IPR017438">
    <property type="entry name" value="ATP-NAD_kinase_N"/>
</dbReference>
<dbReference type="InterPro" id="IPR017437">
    <property type="entry name" value="ATP-NAD_kinase_PpnK-typ_C"/>
</dbReference>
<dbReference type="InterPro" id="IPR016064">
    <property type="entry name" value="NAD/diacylglycerol_kinase_sf"/>
</dbReference>
<dbReference type="InterPro" id="IPR002504">
    <property type="entry name" value="NADK"/>
</dbReference>
<dbReference type="PANTHER" id="PTHR20275">
    <property type="entry name" value="NAD KINASE"/>
    <property type="match status" value="1"/>
</dbReference>
<dbReference type="PANTHER" id="PTHR20275:SF0">
    <property type="entry name" value="NAD KINASE"/>
    <property type="match status" value="1"/>
</dbReference>
<dbReference type="Pfam" id="PF01513">
    <property type="entry name" value="NAD_kinase"/>
    <property type="match status" value="1"/>
</dbReference>
<dbReference type="Pfam" id="PF20143">
    <property type="entry name" value="NAD_kinase_C"/>
    <property type="match status" value="1"/>
</dbReference>
<dbReference type="SUPFAM" id="SSF111331">
    <property type="entry name" value="NAD kinase/diacylglycerol kinase-like"/>
    <property type="match status" value="1"/>
</dbReference>
<sequence>MKKSSMDKEHKQSKLVLKENGSIGLVYRLETAQAVSLAKKVAEFLKERGFEVFTCPDQKVVAGTKAAKTKKHMDDLKLVIVLGGDGTYLRAVRLLEGRSVPILGFNMGSLGFLTAHSADSCFDIIEKTLEGKMVQRPRSMIYSKILRKGKVRAEYHALNDMVIERGSMSQLINTAIYSEKFLVSQVKADGFIVASPSGSTAYNLAAGGPICHPESPVFVVTPVAPHSLTSRPLLFPDDRELSFRLEGKTQKAHFIVDGQKMTELTADDEVIVSRSCYDHWMVREANHNYFHLLREKLKFGDRN</sequence>
<protein>
    <recommendedName>
        <fullName evidence="1">NAD kinase</fullName>
        <ecNumber evidence="1">2.7.1.23</ecNumber>
    </recommendedName>
    <alternativeName>
        <fullName evidence="1">ATP-dependent NAD kinase</fullName>
    </alternativeName>
</protein>
<comment type="function">
    <text evidence="1">Involved in the regulation of the intracellular balance of NAD and NADP, and is a key enzyme in the biosynthesis of NADP. Catalyzes specifically the phosphorylation on 2'-hydroxyl of the adenosine moiety of NAD to yield NADP.</text>
</comment>
<comment type="catalytic activity">
    <reaction evidence="1">
        <text>NAD(+) + ATP = ADP + NADP(+) + H(+)</text>
        <dbReference type="Rhea" id="RHEA:18629"/>
        <dbReference type="ChEBI" id="CHEBI:15378"/>
        <dbReference type="ChEBI" id="CHEBI:30616"/>
        <dbReference type="ChEBI" id="CHEBI:57540"/>
        <dbReference type="ChEBI" id="CHEBI:58349"/>
        <dbReference type="ChEBI" id="CHEBI:456216"/>
        <dbReference type="EC" id="2.7.1.23"/>
    </reaction>
</comment>
<comment type="cofactor">
    <cofactor evidence="1">
        <name>a divalent metal cation</name>
        <dbReference type="ChEBI" id="CHEBI:60240"/>
    </cofactor>
</comment>
<comment type="subcellular location">
    <subcellularLocation>
        <location evidence="1">Cytoplasm</location>
    </subcellularLocation>
</comment>
<comment type="similarity">
    <text evidence="1">Belongs to the NAD kinase family.</text>
</comment>
<feature type="chain" id="PRO_0000229610" description="NAD kinase">
    <location>
        <begin position="1"/>
        <end position="303"/>
    </location>
</feature>
<feature type="active site" description="Proton acceptor" evidence="1">
    <location>
        <position position="85"/>
    </location>
</feature>
<feature type="binding site" evidence="1">
    <location>
        <begin position="85"/>
        <end position="86"/>
    </location>
    <ligand>
        <name>NAD(+)</name>
        <dbReference type="ChEBI" id="CHEBI:57540"/>
    </ligand>
</feature>
<feature type="binding site" evidence="1">
    <location>
        <position position="90"/>
    </location>
    <ligand>
        <name>NAD(+)</name>
        <dbReference type="ChEBI" id="CHEBI:57540"/>
    </ligand>
</feature>
<feature type="binding site" evidence="1">
    <location>
        <begin position="159"/>
        <end position="160"/>
    </location>
    <ligand>
        <name>NAD(+)</name>
        <dbReference type="ChEBI" id="CHEBI:57540"/>
    </ligand>
</feature>
<feature type="binding site" evidence="1">
    <location>
        <position position="187"/>
    </location>
    <ligand>
        <name>NAD(+)</name>
        <dbReference type="ChEBI" id="CHEBI:57540"/>
    </ligand>
</feature>
<feature type="binding site" evidence="1">
    <location>
        <position position="189"/>
    </location>
    <ligand>
        <name>NAD(+)</name>
        <dbReference type="ChEBI" id="CHEBI:57540"/>
    </ligand>
</feature>
<feature type="binding site" evidence="1">
    <location>
        <position position="224"/>
    </location>
    <ligand>
        <name>NAD(+)</name>
        <dbReference type="ChEBI" id="CHEBI:57540"/>
    </ligand>
</feature>
<feature type="binding site" evidence="1">
    <location>
        <position position="259"/>
    </location>
    <ligand>
        <name>NAD(+)</name>
        <dbReference type="ChEBI" id="CHEBI:57540"/>
    </ligand>
</feature>
<keyword id="KW-0067">ATP-binding</keyword>
<keyword id="KW-0963">Cytoplasm</keyword>
<keyword id="KW-0418">Kinase</keyword>
<keyword id="KW-0520">NAD</keyword>
<keyword id="KW-0521">NADP</keyword>
<keyword id="KW-0547">Nucleotide-binding</keyword>
<keyword id="KW-1185">Reference proteome</keyword>
<keyword id="KW-0808">Transferase</keyword>